<comment type="function">
    <text evidence="1 11 14">Cellular myosin that appears to play a role in cytokinesis, cell shape, and specialized functions such as secretion and capping (PubMed:19401332). Required for cortical actin clearance prior to oocyte exocytosis (PubMed:31118423). Promotes cell motility in conjunction with S100A4 (By similarity). During cell spreading, plays an important role in cytoskeleton reorganization, focal contact formation (in the margins but not the central part of spreading cells), and lamellipodial retraction; this function is mechanically antagonized by MYH10 (By similarity).</text>
</comment>
<comment type="subunit">
    <text evidence="1 4 11 12 13">Myosin is a hexameric protein that consists of 2 heavy chain subunits (MHC), 2 alkali light chain subunits (MLC) and 2 regulatory light chain subunits (MLC-2). Interacts with RASIP1 (PubMed:21396893). Interacts with DDR1 (PubMed:19401332). Interacts with PDLIM2 (By similarity). Interacts with SVIL (By similarity). Interacts with HTRA3 (By similarity). Interacts with Myo7a (PubMed:27331610). Interacts with CFAP95 (By similarity). Interacts with LIMCH1; independently of the integration of MYH9 into the myosin complex (By similarity). Interacts with RAB3A (By similarity). Interacts with ZBED4 (By similarity). Interacts with S100A4; this interaction increases cell motility.</text>
</comment>
<comment type="interaction">
    <interactant intactId="EBI-400906">
        <id>Q8VDD5</id>
    </interactant>
    <interactant intactId="EBI-8010314">
        <id>Q923J1</id>
        <label>Trpm7</label>
    </interactant>
    <organismsDiffer>false</organismsDiffer>
    <experiments>4</experiments>
</comment>
<comment type="subcellular location">
    <subcellularLocation>
        <location evidence="11">Cytoplasm</location>
        <location evidence="11">Cytoskeleton</location>
    </subcellularLocation>
    <subcellularLocation>
        <location evidence="11 14">Cytoplasm</location>
        <location evidence="11 14">Cell cortex</location>
    </subcellularLocation>
    <subcellularLocation>
        <location evidence="14">Cytoplasmic vesicle</location>
        <location evidence="14">Secretory vesicle</location>
        <location evidence="14">Cortical granule</location>
    </subcellularLocation>
    <text evidence="1">Colocalizes with actin filaments at lamellipodia margins and at the leading edge of migrating cells (By similarity). In retinal pigment epithelial cells, predominantly localized to stress fiber-like structures with some localization to cytoplasmic puncta (By similarity).</text>
</comment>
<comment type="developmental stage">
    <text evidence="13">In neonatal mouse cochlea, weak levels of expression in both hair cells and supporting cells (at protein level). In the cochlea of six day old mice, expression is restricted to hair cell sterocilia (at protein level).</text>
</comment>
<comment type="domain">
    <text>The rodlike tail sequence is highly repetitive, showing cycles of a 28-residue repeat pattern composed of 4 heptapeptides, characteristic for alpha-helical coiled coils.</text>
</comment>
<comment type="PTM">
    <text evidence="10">ISGylated.</text>
</comment>
<comment type="PTM">
    <text evidence="13">Ubiquitination.</text>
</comment>
<comment type="disruption phenotype">
    <text evidence="14">Reduced litter size and increased polyspermy in the perivitelline space following fertilization.</text>
</comment>
<comment type="similarity">
    <text evidence="16">Belongs to the TRAFAC class myosin-kinesin ATPase superfamily. Myosin family.</text>
</comment>
<comment type="sequence caution" evidence="16">
    <conflict type="erroneous initiation">
        <sequence resource="EMBL-CDS" id="BAE27768"/>
    </conflict>
    <text>Extended N-terminus.</text>
</comment>
<proteinExistence type="evidence at protein level"/>
<protein>
    <recommendedName>
        <fullName>Myosin-9</fullName>
    </recommendedName>
    <alternativeName>
        <fullName>Cellular myosin heavy chain, type A</fullName>
    </alternativeName>
    <alternativeName>
        <fullName>Myosin heavy chain 9</fullName>
    </alternativeName>
    <alternativeName>
        <fullName>Myosin heavy chain, non-muscle IIa</fullName>
    </alternativeName>
    <alternativeName>
        <fullName>Non-muscle myosin heavy chain A</fullName>
        <shortName>NMMHC-A</shortName>
    </alternativeName>
    <alternativeName>
        <fullName>Non-muscle myosin heavy chain IIa</fullName>
        <shortName>NMMHC II-a</shortName>
        <shortName>NMMHC-IIA</shortName>
    </alternativeName>
</protein>
<gene>
    <name type="primary">Myh9</name>
</gene>
<keyword id="KW-0007">Acetylation</keyword>
<keyword id="KW-0009">Actin-binding</keyword>
<keyword id="KW-0067">ATP-binding</keyword>
<keyword id="KW-0112">Calmodulin-binding</keyword>
<keyword id="KW-0130">Cell adhesion</keyword>
<keyword id="KW-0133">Cell shape</keyword>
<keyword id="KW-0175">Coiled coil</keyword>
<keyword id="KW-0963">Cytoplasm</keyword>
<keyword id="KW-0968">Cytoplasmic vesicle</keyword>
<keyword id="KW-0206">Cytoskeleton</keyword>
<keyword id="KW-0903">Direct protein sequencing</keyword>
<keyword id="KW-0488">Methylation</keyword>
<keyword id="KW-0505">Motor protein</keyword>
<keyword id="KW-0518">Myosin</keyword>
<keyword id="KW-0547">Nucleotide-binding</keyword>
<keyword id="KW-0597">Phosphoprotein</keyword>
<keyword id="KW-1185">Reference proteome</keyword>
<keyword id="KW-0832">Ubl conjugation</keyword>
<name>MYH9_MOUSE</name>
<feature type="initiator methionine" description="Removed" evidence="15 25">
    <location>
        <position position="1"/>
    </location>
</feature>
<feature type="chain" id="PRO_0000123417" description="Myosin-9">
    <location>
        <begin position="2"/>
        <end position="1960"/>
    </location>
</feature>
<feature type="domain" description="Myosin N-terminal SH3-like" evidence="8">
    <location>
        <begin position="27"/>
        <end position="77"/>
    </location>
</feature>
<feature type="domain" description="Myosin motor" evidence="7">
    <location>
        <begin position="81"/>
        <end position="776"/>
    </location>
</feature>
<feature type="domain" description="IQ" evidence="6">
    <location>
        <begin position="779"/>
        <end position="808"/>
    </location>
</feature>
<feature type="region of interest" description="Mediates interaction with LIMCH1" evidence="1">
    <location>
        <begin position="2"/>
        <end position="838"/>
    </location>
</feature>
<feature type="region of interest" description="Actin-binding">
    <location>
        <begin position="654"/>
        <end position="676"/>
    </location>
</feature>
<feature type="region of interest" description="Disordered" evidence="9">
    <location>
        <begin position="1035"/>
        <end position="1057"/>
    </location>
</feature>
<feature type="region of interest" description="Disordered" evidence="9">
    <location>
        <begin position="1117"/>
        <end position="1167"/>
    </location>
</feature>
<feature type="region of interest" description="Disordered" evidence="9">
    <location>
        <begin position="1327"/>
        <end position="1352"/>
    </location>
</feature>
<feature type="region of interest" description="Disordered" evidence="9">
    <location>
        <begin position="1768"/>
        <end position="1788"/>
    </location>
</feature>
<feature type="region of interest" description="Disordered" evidence="9">
    <location>
        <begin position="1877"/>
        <end position="1908"/>
    </location>
</feature>
<feature type="region of interest" description="Disordered" evidence="9">
    <location>
        <begin position="1939"/>
        <end position="1960"/>
    </location>
</feature>
<feature type="coiled-coil region" evidence="5">
    <location>
        <begin position="841"/>
        <end position="1926"/>
    </location>
</feature>
<feature type="compositionally biased region" description="Basic and acidic residues" evidence="9">
    <location>
        <begin position="1035"/>
        <end position="1055"/>
    </location>
</feature>
<feature type="compositionally biased region" description="Basic and acidic residues" evidence="9">
    <location>
        <begin position="1122"/>
        <end position="1148"/>
    </location>
</feature>
<feature type="compositionally biased region" description="Basic and acidic residues" evidence="9">
    <location>
        <begin position="1332"/>
        <end position="1352"/>
    </location>
</feature>
<feature type="compositionally biased region" description="Basic and acidic residues" evidence="9">
    <location>
        <begin position="1948"/>
        <end position="1960"/>
    </location>
</feature>
<feature type="binding site" evidence="5">
    <location>
        <begin position="174"/>
        <end position="181"/>
    </location>
    <ligand>
        <name>ATP</name>
        <dbReference type="ChEBI" id="CHEBI:30616"/>
    </ligand>
</feature>
<feature type="modified residue" description="N-acetylalanine" evidence="15 25">
    <location>
        <position position="2"/>
    </location>
</feature>
<feature type="modified residue" description="N6-acetyllysine" evidence="25">
    <location>
        <position position="8"/>
    </location>
</feature>
<feature type="modified residue" description="Phosphotyrosine" evidence="1">
    <location>
        <position position="11"/>
    </location>
</feature>
<feature type="modified residue" description="N6-acetyllysine" evidence="1">
    <location>
        <position position="102"/>
    </location>
</feature>
<feature type="modified residue" description="N6-acetyllysine" evidence="25">
    <location>
        <position position="299"/>
    </location>
</feature>
<feature type="modified residue" description="N6-acetyllysine" evidence="2">
    <location>
        <position position="435"/>
    </location>
</feature>
<feature type="modified residue" description="N6-acetyllysine" evidence="25">
    <location>
        <position position="613"/>
    </location>
</feature>
<feature type="modified residue" description="Phosphoserine" evidence="1">
    <location>
        <position position="628"/>
    </location>
</feature>
<feature type="modified residue" description="Phosphotyrosine" evidence="20">
    <location>
        <position position="754"/>
    </location>
</feature>
<feature type="modified residue" description="N6-succinyllysine" evidence="25">
    <location>
        <position position="850"/>
    </location>
</feature>
<feature type="modified residue" description="N6-acetyllysine" evidence="25">
    <location>
        <position position="860"/>
    </location>
</feature>
<feature type="modified residue" description="N6-acetyllysine" evidence="25">
    <location>
        <position position="975"/>
    </location>
</feature>
<feature type="modified residue" description="N6-acetyllysine" evidence="25">
    <location>
        <position position="1024"/>
    </location>
</feature>
<feature type="modified residue" description="Phosphoserine" evidence="24">
    <location>
        <position position="1114"/>
    </location>
</feature>
<feature type="modified residue" description="N6-acetyllysine" evidence="3">
    <location>
        <position position="1234"/>
    </location>
</feature>
<feature type="modified residue" description="N6-acetyllysine" evidence="25">
    <location>
        <position position="1249"/>
    </location>
</feature>
<feature type="modified residue" description="N6-acetyllysine" evidence="1">
    <location>
        <position position="1357"/>
    </location>
</feature>
<feature type="modified residue" description="N6-acetyllysine" evidence="1">
    <location>
        <position position="1392"/>
    </location>
</feature>
<feature type="modified residue" description="N6-acetyllysine" evidence="1">
    <location>
        <position position="1404"/>
    </location>
</feature>
<feature type="modified residue" description="N6-acetyllysine" evidence="1">
    <location>
        <position position="1410"/>
    </location>
</feature>
<feature type="modified residue" description="N6-acetyllysine" evidence="25">
    <location>
        <position position="1459"/>
    </location>
</feature>
<feature type="modified residue" description="N6-acetyllysine" evidence="1">
    <location>
        <position position="1638"/>
    </location>
</feature>
<feature type="modified residue" description="N6-succinyllysine" evidence="25">
    <location>
        <position position="1669"/>
    </location>
</feature>
<feature type="modified residue" description="Phosphoserine" evidence="1">
    <location>
        <position position="1714"/>
    </location>
</feature>
<feature type="modified residue" description="N6-acetyllysine" evidence="25">
    <location>
        <position position="1793"/>
    </location>
</feature>
<feature type="modified residue" description="N6-acetyllysine" evidence="25">
    <location>
        <position position="1802"/>
    </location>
</feature>
<feature type="modified residue" description="N6-acetyllysine" evidence="25">
    <location>
        <position position="1845"/>
    </location>
</feature>
<feature type="modified residue" description="Omega-N-methylarginine" evidence="3">
    <location>
        <position position="1923"/>
    </location>
</feature>
<feature type="modified residue" description="Phosphothreonine" evidence="19 22 24">
    <location>
        <position position="1939"/>
    </location>
</feature>
<feature type="modified residue" description="Phosphoserine" evidence="17 18 19 21 22 23 24">
    <location>
        <position position="1943"/>
    </location>
</feature>
<feature type="sequence conflict" description="In Ref. 1; CAC85955." evidence="16" ref="1">
    <original>Q</original>
    <variation>L</variation>
    <location>
        <position position="1733"/>
    </location>
</feature>
<sequence>MAQQAADKYLYVDKNFINNPLAQADWAAKKLVWVPSSKNGFEPASLKEEVGEEAIVELVENGKKVKVNKDDIQKMNPPKFSKVEDMAELTCLNEASVLHNLKERYYSGLIYTYSGLFCVVINPYKNLPIYSEEIVEMYKGKKRHEMPPHIYAITDTAYRSMMQDREDQSILCTGESGAGKTENTKKVIQYLAHVASSHKSKKDQGELERQLLQANPILEAFGNAKTVKNDNSSRFGKFIRINFDVNGYIVGANIETYLLEKSRAIRQAKEERTFHIFYYLLSGAGEHLKTDLLLEPYNKYRFLSNGHVTIPGQQDKDMFQETMEAMRIMGIPEDEQMGLLRVISGVLQLGNIAFKKERNTDQASMPDNTAAQKVSHLLGINVTDFTRGILTPRIKVGRDYVQKAQTKEQADFAIEALAKATYERMFRWLVLRINKALDKTKRQGASFIGILDIAGFEIFDLNSFEQLCINYTNEKLQQLFNHTMFILEQEEYQREGIEWNFIDFGLDLQPCIDLIEKPAGPPGILALLDEECWFPKATDKSFVEKVVQEQGTHPKFQKPKQLKDKADFCIIHYAGKVDYKADEWLMKNMDPLNDNIATLLHQSSDKFVSELWKDVDRIIGLDQVAGMSETALPGAFKTRKGMFRTVGQLYKEQLAKLMATLRNTNPNFVRCIIPNHEKKAGKLDPHLVLDQLRCNGVLEGIRICRQGFPNRVVFQEFRQRYEILTPNSIPKGFMDGKQACVLMIKALELDSNLYRIGQSKVFFRAGVLAHLEEERDLKITDVIIGFQACCRGYLARKAFAKRQQQLTAMKVLQRNCAAYLRLRNWQWWRLFTKVKPLLNSIRHEDELLAKEAELTKVREKHLAAENRLTEMETMQSQLMAEKLQLQEQLQAETELCAEAEELRARLTAKKQELEEICHDLEARVEEEEERCQYLQAEKKKMQQNIQELEEQLEEEESARQKLQLEKVTTEAKLKKLEEDQIIMEDQNCKLAKEKKLLEDRVAEFTTNLMEEEEKSKSLAKLKNKHEAMITDLEERLRREEKQRQELEKTRRKLEGDSTDLSDQIAELQAQIAELKMQLAKKEEELQAALARVEEEAAQKNMALKKIRELETQISELQEDLESERASRNKAEKQKRDLGEELEALKTELEDTLDSTAAQQELRSKREQEVSILKKTLEDEAKTHEAQIQEMRQKHSQAVEELADQLEQTKRVKATLEKAKQTLENERGELANEVKALLQGKGDSEHKRKKVEAQLQELQVKFSEGERVRTELADKVTKLQVELDSVTGLLSQSDSKSSKLTKDFSALESQLQDTQELLQEENRQKLSLSTKLKQMEDEKNSFREQLEEEEEAKRNLEKQIATLHAQVTDMKKKMEDGVGCLETAEEAKRRLQKDLEGLSQRLEEKVAAYDKLEKTKTRLQQELDDLLVDLDHQRQSVSNLEKKQKKFDQLLAEEKTISAKYAEERDRAEAEAREKETKALSLARALEEAMEQKAELERLNKQFRTEMEDLMSSKDDVGKSVHELEKSKRALEQQVEEMKTQLEELEDELQATEDAKLRLEVNLQAMKAQFERDLQGRDEQSEEKKKQLVRQVREMEAELEDERKQRSMAMAARKKLEMDLKDLEAHIDTANKNREEAIKQLRKLQAQMKDCMRELDDTRASREEILAQAKENEKKLKSMEAEMIQLQEELAAAERAKRQAQQERDELADEIANSSGKGALALEEKRRLEARIAQLEEELEEEQGNTELINDRLKKANLQIDQINTDLNLERSHAQKNENARQQLERQNKELKAKLQEMESAVKSKYKASIAALEAKIAQLEEQLDNETKERQAASKQVRRTEKKLKDVLLQVEDERRNAEQFKDQADKASTRLKQLKRQLEEAEEEAQRANASRRKLQRELEDATETADAMNREVSSLKNKLRRGDLPFVVTRRIVRKGTGDCSDEEVDGKADGADAKAAE</sequence>
<evidence type="ECO:0000250" key="1">
    <source>
        <dbReference type="UniProtKB" id="P35579"/>
    </source>
</evidence>
<evidence type="ECO:0000250" key="2">
    <source>
        <dbReference type="UniProtKB" id="P35580"/>
    </source>
</evidence>
<evidence type="ECO:0000250" key="3">
    <source>
        <dbReference type="UniProtKB" id="Q61879"/>
    </source>
</evidence>
<evidence type="ECO:0000250" key="4">
    <source>
        <dbReference type="UniProtKB" id="Q62812"/>
    </source>
</evidence>
<evidence type="ECO:0000255" key="5"/>
<evidence type="ECO:0000255" key="6">
    <source>
        <dbReference type="PROSITE-ProRule" id="PRU00116"/>
    </source>
</evidence>
<evidence type="ECO:0000255" key="7">
    <source>
        <dbReference type="PROSITE-ProRule" id="PRU00782"/>
    </source>
</evidence>
<evidence type="ECO:0000255" key="8">
    <source>
        <dbReference type="PROSITE-ProRule" id="PRU01190"/>
    </source>
</evidence>
<evidence type="ECO:0000256" key="9">
    <source>
        <dbReference type="SAM" id="MobiDB-lite"/>
    </source>
</evidence>
<evidence type="ECO:0000269" key="10">
    <source>
    </source>
</evidence>
<evidence type="ECO:0000269" key="11">
    <source>
    </source>
</evidence>
<evidence type="ECO:0000269" key="12">
    <source>
    </source>
</evidence>
<evidence type="ECO:0000269" key="13">
    <source>
    </source>
</evidence>
<evidence type="ECO:0000269" key="14">
    <source>
    </source>
</evidence>
<evidence type="ECO:0000269" key="15">
    <source ref="4"/>
</evidence>
<evidence type="ECO:0000305" key="16"/>
<evidence type="ECO:0007744" key="17">
    <source>
    </source>
</evidence>
<evidence type="ECO:0007744" key="18">
    <source>
    </source>
</evidence>
<evidence type="ECO:0007744" key="19">
    <source>
    </source>
</evidence>
<evidence type="ECO:0007744" key="20">
    <source>
    </source>
</evidence>
<evidence type="ECO:0007744" key="21">
    <source>
    </source>
</evidence>
<evidence type="ECO:0007744" key="22">
    <source>
    </source>
</evidence>
<evidence type="ECO:0007744" key="23">
    <source>
    </source>
</evidence>
<evidence type="ECO:0007744" key="24">
    <source>
    </source>
</evidence>
<evidence type="ECO:0007744" key="25">
    <source>
    </source>
</evidence>
<reference key="1">
    <citation type="journal article" date="2002" name="Gene">
        <title>Cloning of the murine non-muscle myosin heavy chain IIA gene ortholog of human MYH9 responsible for May-Hegglin, Sebastian, Fechtner, and Epstein syndromes.</title>
        <authorList>
            <person name="D'Apolito M."/>
            <person name="Guarnieri V."/>
            <person name="Boncristiano M."/>
            <person name="Zelante L."/>
            <person name="Savoia A."/>
        </authorList>
    </citation>
    <scope>NUCLEOTIDE SEQUENCE [MRNA]</scope>
</reference>
<reference key="2">
    <citation type="journal article" date="2005" name="Science">
        <title>The transcriptional landscape of the mammalian genome.</title>
        <authorList>
            <person name="Carninci P."/>
            <person name="Kasukawa T."/>
            <person name="Katayama S."/>
            <person name="Gough J."/>
            <person name="Frith M.C."/>
            <person name="Maeda N."/>
            <person name="Oyama R."/>
            <person name="Ravasi T."/>
            <person name="Lenhard B."/>
            <person name="Wells C."/>
            <person name="Kodzius R."/>
            <person name="Shimokawa K."/>
            <person name="Bajic V.B."/>
            <person name="Brenner S.E."/>
            <person name="Batalov S."/>
            <person name="Forrest A.R."/>
            <person name="Zavolan M."/>
            <person name="Davis M.J."/>
            <person name="Wilming L.G."/>
            <person name="Aidinis V."/>
            <person name="Allen J.E."/>
            <person name="Ambesi-Impiombato A."/>
            <person name="Apweiler R."/>
            <person name="Aturaliya R.N."/>
            <person name="Bailey T.L."/>
            <person name="Bansal M."/>
            <person name="Baxter L."/>
            <person name="Beisel K.W."/>
            <person name="Bersano T."/>
            <person name="Bono H."/>
            <person name="Chalk A.M."/>
            <person name="Chiu K.P."/>
            <person name="Choudhary V."/>
            <person name="Christoffels A."/>
            <person name="Clutterbuck D.R."/>
            <person name="Crowe M.L."/>
            <person name="Dalla E."/>
            <person name="Dalrymple B.P."/>
            <person name="de Bono B."/>
            <person name="Della Gatta G."/>
            <person name="di Bernardo D."/>
            <person name="Down T."/>
            <person name="Engstrom P."/>
            <person name="Fagiolini M."/>
            <person name="Faulkner G."/>
            <person name="Fletcher C.F."/>
            <person name="Fukushima T."/>
            <person name="Furuno M."/>
            <person name="Futaki S."/>
            <person name="Gariboldi M."/>
            <person name="Georgii-Hemming P."/>
            <person name="Gingeras T.R."/>
            <person name="Gojobori T."/>
            <person name="Green R.E."/>
            <person name="Gustincich S."/>
            <person name="Harbers M."/>
            <person name="Hayashi Y."/>
            <person name="Hensch T.K."/>
            <person name="Hirokawa N."/>
            <person name="Hill D."/>
            <person name="Huminiecki L."/>
            <person name="Iacono M."/>
            <person name="Ikeo K."/>
            <person name="Iwama A."/>
            <person name="Ishikawa T."/>
            <person name="Jakt M."/>
            <person name="Kanapin A."/>
            <person name="Katoh M."/>
            <person name="Kawasawa Y."/>
            <person name="Kelso J."/>
            <person name="Kitamura H."/>
            <person name="Kitano H."/>
            <person name="Kollias G."/>
            <person name="Krishnan S.P."/>
            <person name="Kruger A."/>
            <person name="Kummerfeld S.K."/>
            <person name="Kurochkin I.V."/>
            <person name="Lareau L.F."/>
            <person name="Lazarevic D."/>
            <person name="Lipovich L."/>
            <person name="Liu J."/>
            <person name="Liuni S."/>
            <person name="McWilliam S."/>
            <person name="Madan Babu M."/>
            <person name="Madera M."/>
            <person name="Marchionni L."/>
            <person name="Matsuda H."/>
            <person name="Matsuzawa S."/>
            <person name="Miki H."/>
            <person name="Mignone F."/>
            <person name="Miyake S."/>
            <person name="Morris K."/>
            <person name="Mottagui-Tabar S."/>
            <person name="Mulder N."/>
            <person name="Nakano N."/>
            <person name="Nakauchi H."/>
            <person name="Ng P."/>
            <person name="Nilsson R."/>
            <person name="Nishiguchi S."/>
            <person name="Nishikawa S."/>
            <person name="Nori F."/>
            <person name="Ohara O."/>
            <person name="Okazaki Y."/>
            <person name="Orlando V."/>
            <person name="Pang K.C."/>
            <person name="Pavan W.J."/>
            <person name="Pavesi G."/>
            <person name="Pesole G."/>
            <person name="Petrovsky N."/>
            <person name="Piazza S."/>
            <person name="Reed J."/>
            <person name="Reid J.F."/>
            <person name="Ring B.Z."/>
            <person name="Ringwald M."/>
            <person name="Rost B."/>
            <person name="Ruan Y."/>
            <person name="Salzberg S.L."/>
            <person name="Sandelin A."/>
            <person name="Schneider C."/>
            <person name="Schoenbach C."/>
            <person name="Sekiguchi K."/>
            <person name="Semple C.A."/>
            <person name="Seno S."/>
            <person name="Sessa L."/>
            <person name="Sheng Y."/>
            <person name="Shibata Y."/>
            <person name="Shimada H."/>
            <person name="Shimada K."/>
            <person name="Silva D."/>
            <person name="Sinclair B."/>
            <person name="Sperling S."/>
            <person name="Stupka E."/>
            <person name="Sugiura K."/>
            <person name="Sultana R."/>
            <person name="Takenaka Y."/>
            <person name="Taki K."/>
            <person name="Tammoja K."/>
            <person name="Tan S.L."/>
            <person name="Tang S."/>
            <person name="Taylor M.S."/>
            <person name="Tegner J."/>
            <person name="Teichmann S.A."/>
            <person name="Ueda H.R."/>
            <person name="van Nimwegen E."/>
            <person name="Verardo R."/>
            <person name="Wei C.L."/>
            <person name="Yagi K."/>
            <person name="Yamanishi H."/>
            <person name="Zabarovsky E."/>
            <person name="Zhu S."/>
            <person name="Zimmer A."/>
            <person name="Hide W."/>
            <person name="Bult C."/>
            <person name="Grimmond S.M."/>
            <person name="Teasdale R.D."/>
            <person name="Liu E.T."/>
            <person name="Brusic V."/>
            <person name="Quackenbush J."/>
            <person name="Wahlestedt C."/>
            <person name="Mattick J.S."/>
            <person name="Hume D.A."/>
            <person name="Kai C."/>
            <person name="Sasaki D."/>
            <person name="Tomaru Y."/>
            <person name="Fukuda S."/>
            <person name="Kanamori-Katayama M."/>
            <person name="Suzuki M."/>
            <person name="Aoki J."/>
            <person name="Arakawa T."/>
            <person name="Iida J."/>
            <person name="Imamura K."/>
            <person name="Itoh M."/>
            <person name="Kato T."/>
            <person name="Kawaji H."/>
            <person name="Kawagashira N."/>
            <person name="Kawashima T."/>
            <person name="Kojima M."/>
            <person name="Kondo S."/>
            <person name="Konno H."/>
            <person name="Nakano K."/>
            <person name="Ninomiya N."/>
            <person name="Nishio T."/>
            <person name="Okada M."/>
            <person name="Plessy C."/>
            <person name="Shibata K."/>
            <person name="Shiraki T."/>
            <person name="Suzuki S."/>
            <person name="Tagami M."/>
            <person name="Waki K."/>
            <person name="Watahiki A."/>
            <person name="Okamura-Oho Y."/>
            <person name="Suzuki H."/>
            <person name="Kawai J."/>
            <person name="Hayashizaki Y."/>
        </authorList>
    </citation>
    <scope>NUCLEOTIDE SEQUENCE [LARGE SCALE MRNA]</scope>
    <source>
        <strain>C57BL/6J</strain>
        <tissue>Amnion</tissue>
        <tissue>Brain</tissue>
        <tissue>Embryo</tissue>
        <tissue>Embryonic liver</tissue>
        <tissue>Placenta</tissue>
    </source>
</reference>
<reference key="3">
    <citation type="journal article" date="2009" name="PLoS Biol.">
        <title>Lineage-specific biology revealed by a finished genome assembly of the mouse.</title>
        <authorList>
            <person name="Church D.M."/>
            <person name="Goodstadt L."/>
            <person name="Hillier L.W."/>
            <person name="Zody M.C."/>
            <person name="Goldstein S."/>
            <person name="She X."/>
            <person name="Bult C.J."/>
            <person name="Agarwala R."/>
            <person name="Cherry J.L."/>
            <person name="DiCuccio M."/>
            <person name="Hlavina W."/>
            <person name="Kapustin Y."/>
            <person name="Meric P."/>
            <person name="Maglott D."/>
            <person name="Birtle Z."/>
            <person name="Marques A.C."/>
            <person name="Graves T."/>
            <person name="Zhou S."/>
            <person name="Teague B."/>
            <person name="Potamousis K."/>
            <person name="Churas C."/>
            <person name="Place M."/>
            <person name="Herschleb J."/>
            <person name="Runnheim R."/>
            <person name="Forrest D."/>
            <person name="Amos-Landgraf J."/>
            <person name="Schwartz D.C."/>
            <person name="Cheng Z."/>
            <person name="Lindblad-Toh K."/>
            <person name="Eichler E.E."/>
            <person name="Ponting C.P."/>
        </authorList>
    </citation>
    <scope>NUCLEOTIDE SEQUENCE [LARGE SCALE GENOMIC DNA]</scope>
    <source>
        <strain>C57BL/6J</strain>
    </source>
</reference>
<reference key="4">
    <citation type="submission" date="2008-03" db="UniProtKB">
        <authorList>
            <person name="Sumpton D.P."/>
            <person name="Sandilands E."/>
            <person name="Frame M.C."/>
            <person name="Bienvenut W.V."/>
        </authorList>
    </citation>
    <scope>PROTEIN SEQUENCE OF 2-64; 83-102; 126-139; 144-159; 186-199; 210-225; 241-261; 273-299; 302-355; 374-387; 408-419; 476-494; 518-536; 564-613; 618-637; 645-651; 663-678; 683-702; 712-731; 738-755; 765-775; 802-810; 815-821; 834-850; 910-923; 931-938; 941-959; 975-989; 1001-1014; 1023-1035; 1052-1075; 1081-1091; 1106-1124; 1136-1162; 1166-1174; 1182-1191; 1194-1210; 1227-1234; 1249-1260; 1278-1295; 1302-1322; 1343-1353; 1358-1370; 1393-1400; 1405-1413; 1418-1441; 1445-1454; 1484-1492; 1504-1518; 1529-1566; 1593-1602; 1614-1620; 1659-1669; 1677-1694; 1698-1724; 1731-1751; 1754-1770; 1792-1802; 1807-1828; 1844-1855; 1857-1867; 1877-1888; 1899-1912 AND 1923-1932</scope>
    <scope>CLEAVAGE OF INITIATOR METHIONINE</scope>
    <scope>ACETYLATION AT ALA-2</scope>
    <scope>IDENTIFICATION BY MASS SPECTROMETRY</scope>
    <source>
        <tissue>Embryonic fibroblast</tissue>
    </source>
</reference>
<reference key="5">
    <citation type="journal article" date="2004" name="DNA Res.">
        <title>Prediction of the coding sequences of mouse homologues of FLJ genes: the complete nucleotide sequences of 110 mouse FLJ-homologous cDNAs identified by screening of terminal sequences of cDNA clones randomly sampled from size-fractionated libraries.</title>
        <authorList>
            <person name="Okazaki N."/>
            <person name="Kikuno R."/>
            <person name="Ohara R."/>
            <person name="Inamoto S."/>
            <person name="Koseki H."/>
            <person name="Hiraoka S."/>
            <person name="Saga Y."/>
            <person name="Kitamura H."/>
            <person name="Nakagawa T."/>
            <person name="Nagase T."/>
            <person name="Ohara O."/>
            <person name="Koga H."/>
        </authorList>
    </citation>
    <scope>NUCLEOTIDE SEQUENCE [LARGE SCALE MRNA] OF 626-1960</scope>
    <source>
        <strain>ICR</strain>
        <tissue>Embryonic tail</tissue>
    </source>
</reference>
<reference key="6">
    <citation type="journal article" date="2004" name="Genome Res.">
        <title>The status, quality, and expansion of the NIH full-length cDNA project: the Mammalian Gene Collection (MGC).</title>
        <authorList>
            <consortium name="The MGC Project Team"/>
        </authorList>
    </citation>
    <scope>NUCLEOTIDE SEQUENCE [LARGE SCALE MRNA] OF 1066-1960</scope>
    <source>
        <strain>FVB/N</strain>
        <tissue>Mammary tumor</tissue>
    </source>
</reference>
<reference key="7">
    <citation type="journal article" date="2005" name="Biochem. Biophys. Res. Commun.">
        <title>Proteomic identification of proteins conjugated to ISG15 in mouse and human cells.</title>
        <authorList>
            <person name="Giannakopoulos N.V."/>
            <person name="Luo J.K."/>
            <person name="Papov V."/>
            <person name="Zou W."/>
            <person name="Lenschow D.J."/>
            <person name="Jacobs B.S."/>
            <person name="Borden E.C."/>
            <person name="Li J."/>
            <person name="Virgin H.W."/>
            <person name="Zhang D.E."/>
        </authorList>
    </citation>
    <scope>ISGYLATION</scope>
</reference>
<reference key="8">
    <citation type="journal article" date="2006" name="Mol. Cell. Proteomics">
        <title>Comprehensive identification of phosphorylation sites in postsynaptic density preparations.</title>
        <authorList>
            <person name="Trinidad J.C."/>
            <person name="Specht C.G."/>
            <person name="Thalhammer A."/>
            <person name="Schoepfer R."/>
            <person name="Burlingame A.L."/>
        </authorList>
    </citation>
    <scope>PHOSPHORYLATION [LARGE SCALE ANALYSIS] AT SER-1943</scope>
    <scope>IDENTIFICATION BY MASS SPECTROMETRY [LARGE SCALE ANALYSIS]</scope>
    <source>
        <tissue>Brain</tissue>
    </source>
</reference>
<reference key="9">
    <citation type="journal article" date="2007" name="J. Immunol.">
        <title>Quantitative time-resolved phosphoproteomic analysis of mast cell signaling.</title>
        <authorList>
            <person name="Cao L."/>
            <person name="Yu K."/>
            <person name="Banh C."/>
            <person name="Nguyen V."/>
            <person name="Ritz A."/>
            <person name="Raphael B.J."/>
            <person name="Kawakami Y."/>
            <person name="Kawakami T."/>
            <person name="Salomon A.R."/>
        </authorList>
    </citation>
    <scope>PHOSPHORYLATION [LARGE SCALE ANALYSIS] AT TYR-754</scope>
    <scope>IDENTIFICATION BY MASS SPECTROMETRY [LARGE SCALE ANALYSIS]</scope>
    <source>
        <tissue>Mast cell</tissue>
    </source>
</reference>
<reference key="10">
    <citation type="journal article" date="2007" name="Mol. Cell. Proteomics">
        <title>Mitochondrial phosphoproteome revealed by an improved IMAC method and MS/MS/MS.</title>
        <authorList>
            <person name="Lee J."/>
            <person name="Xu Y."/>
            <person name="Chen Y."/>
            <person name="Sprung R."/>
            <person name="Kim S.C."/>
            <person name="Xie S."/>
            <person name="Zhao Y."/>
        </authorList>
    </citation>
    <scope>PHOSPHORYLATION [LARGE SCALE ANALYSIS] AT SER-1943</scope>
    <scope>IDENTIFICATION BY MASS SPECTROMETRY [LARGE SCALE ANALYSIS]</scope>
    <source>
        <tissue>Liver</tissue>
    </source>
</reference>
<reference key="11">
    <citation type="journal article" date="2007" name="Proc. Natl. Acad. Sci. U.S.A.">
        <title>Large-scale phosphorylation analysis of mouse liver.</title>
        <authorList>
            <person name="Villen J."/>
            <person name="Beausoleil S.A."/>
            <person name="Gerber S.A."/>
            <person name="Gygi S.P."/>
        </authorList>
    </citation>
    <scope>PHOSPHORYLATION [LARGE SCALE ANALYSIS] AT THR-1939 AND SER-1943</scope>
    <scope>IDENTIFICATION BY MASS SPECTROMETRY [LARGE SCALE ANALYSIS]</scope>
    <source>
        <tissue>Liver</tissue>
    </source>
</reference>
<reference key="12">
    <citation type="journal article" date="2008" name="J. Proteome Res.">
        <title>Specific phosphopeptide enrichment with immobilized titanium ion affinity chromatography adsorbent for phosphoproteome analysis.</title>
        <authorList>
            <person name="Zhou H."/>
            <person name="Ye M."/>
            <person name="Dong J."/>
            <person name="Han G."/>
            <person name="Jiang X."/>
            <person name="Wu R."/>
            <person name="Zou H."/>
        </authorList>
    </citation>
    <scope>PHOSPHORYLATION [LARGE SCALE ANALYSIS] AT SER-1943</scope>
    <scope>IDENTIFICATION BY MASS SPECTROMETRY [LARGE SCALE ANALYSIS]</scope>
    <source>
        <tissue>Liver</tissue>
    </source>
</reference>
<reference key="13">
    <citation type="journal article" date="2009" name="Immunity">
        <title>The phagosomal proteome in interferon-gamma-activated macrophages.</title>
        <authorList>
            <person name="Trost M."/>
            <person name="English L."/>
            <person name="Lemieux S."/>
            <person name="Courcelles M."/>
            <person name="Desjardins M."/>
            <person name="Thibault P."/>
        </authorList>
    </citation>
    <scope>PHOSPHORYLATION [LARGE SCALE ANALYSIS] AT SER-1943</scope>
    <scope>IDENTIFICATION BY MASS SPECTROMETRY [LARGE SCALE ANALYSIS]</scope>
</reference>
<reference key="14">
    <citation type="journal article" date="2009" name="J. Cell Sci.">
        <title>The collagen receptor DDR1 regulates cell spreading and motility by associating with myosin IIA.</title>
        <authorList>
            <person name="Huang Y."/>
            <person name="Arora P."/>
            <person name="McCulloch C.A."/>
            <person name="Vogel W.F."/>
        </authorList>
    </citation>
    <scope>FUNCTION</scope>
    <scope>SUBCELLULAR LOCATION</scope>
    <scope>INTERACTION WITH DDR1</scope>
    <scope>IDENTIFICATION BY MASS SPECTROMETRY</scope>
</reference>
<reference key="15">
    <citation type="journal article" date="2009" name="Mol. Cell. Proteomics">
        <title>Large scale localization of protein phosphorylation by use of electron capture dissociation mass spectrometry.</title>
        <authorList>
            <person name="Sweet S.M."/>
            <person name="Bailey C.M."/>
            <person name="Cunningham D.L."/>
            <person name="Heath J.K."/>
            <person name="Cooper H.J."/>
        </authorList>
    </citation>
    <scope>PHOSPHORYLATION [LARGE SCALE ANALYSIS] AT THR-1939 AND SER-1943</scope>
    <scope>IDENTIFICATION BY MASS SPECTROMETRY [LARGE SCALE ANALYSIS]</scope>
    <source>
        <tissue>Embryonic fibroblast</tissue>
    </source>
</reference>
<reference key="16">
    <citation type="journal article" date="2010" name="Cell">
        <title>A tissue-specific atlas of mouse protein phosphorylation and expression.</title>
        <authorList>
            <person name="Huttlin E.L."/>
            <person name="Jedrychowski M.P."/>
            <person name="Elias J.E."/>
            <person name="Goswami T."/>
            <person name="Rad R."/>
            <person name="Beausoleil S.A."/>
            <person name="Villen J."/>
            <person name="Haas W."/>
            <person name="Sowa M.E."/>
            <person name="Gygi S.P."/>
        </authorList>
    </citation>
    <scope>PHOSPHORYLATION [LARGE SCALE ANALYSIS] AT SER-1114; THR-1939 AND SER-1943</scope>
    <scope>IDENTIFICATION BY MASS SPECTROMETRY [LARGE SCALE ANALYSIS]</scope>
    <source>
        <tissue>Brain</tissue>
        <tissue>Brown adipose tissue</tissue>
        <tissue>Heart</tissue>
        <tissue>Kidney</tissue>
        <tissue>Liver</tissue>
        <tissue>Lung</tissue>
        <tissue>Pancreas</tissue>
        <tissue>Spleen</tissue>
        <tissue>Testis</tissue>
    </source>
</reference>
<reference key="17">
    <citation type="journal article" date="2011" name="Dev. Cell">
        <title>Blood vessel tubulogenesis requires Rasip1 regulation of GTPase signaling.</title>
        <authorList>
            <person name="Xu K."/>
            <person name="Sacharidou A."/>
            <person name="Fu S."/>
            <person name="Chong D.C."/>
            <person name="Skaug B."/>
            <person name="Chen Z.J."/>
            <person name="Davis G.E."/>
            <person name="Cleaver O."/>
        </authorList>
    </citation>
    <scope>INTERACTION WITH RASIP1</scope>
</reference>
<reference key="18">
    <citation type="journal article" date="2013" name="Mol. Cell">
        <title>SIRT5-mediated lysine desuccinylation impacts diverse metabolic pathways.</title>
        <authorList>
            <person name="Park J."/>
            <person name="Chen Y."/>
            <person name="Tishkoff D.X."/>
            <person name="Peng C."/>
            <person name="Tan M."/>
            <person name="Dai L."/>
            <person name="Xie Z."/>
            <person name="Zhang Y."/>
            <person name="Zwaans B.M."/>
            <person name="Skinner M.E."/>
            <person name="Lombard D.B."/>
            <person name="Zhao Y."/>
        </authorList>
    </citation>
    <scope>ACETYLATION [LARGE SCALE ANALYSIS] AT ALA-2; LYS-8; LYS-299; LYS-613; LYS-860; LYS-975; LYS-1024; LYS-1249; LYS-1459; LYS-1793; LYS-1802 AND LYS-1845</scope>
    <scope>SUCCINYLATION [LARGE SCALE ANALYSIS] AT LYS-850 AND LYS-1669</scope>
    <scope>CLEAVAGE OF INITIATOR METHIONINE [LARGE SCALE ANALYSIS]</scope>
    <scope>IDENTIFICATION BY MASS SPECTROMETRY [LARGE SCALE ANALYSIS]</scope>
    <source>
        <tissue>Embryonic fibroblast</tissue>
    </source>
</reference>
<reference key="19">
    <citation type="journal article" date="2016" name="Elife">
        <title>The E3 ligase Ubr3 regulates Usher syndrome and MYH9 disorder proteins in the auditory organs of Drosophila and mammals.</title>
        <authorList>
            <person name="Li T."/>
            <person name="Giagtzoglou N."/>
            <person name="Eberl D.F."/>
            <person name="Jaiswal S.N."/>
            <person name="Cai T."/>
            <person name="Godt D."/>
            <person name="Groves A.K."/>
            <person name="Bellen H.J."/>
        </authorList>
    </citation>
    <scope>SUBUNIT</scope>
    <scope>DEVELOPMENTAL STAGE</scope>
    <scope>UBIQUITINATION</scope>
</reference>
<reference key="20">
    <citation type="journal article" date="2019" name="Nat. Commun.">
        <title>Anchoring cortical granules in the cortex ensures trafficking to the plasma membrane for post-fertilization exocytosis.</title>
        <authorList>
            <person name="Vogt E.J."/>
            <person name="Tokuhiro K."/>
            <person name="Guo M."/>
            <person name="Dale R."/>
            <person name="Yang G."/>
            <person name="Shin S.W."/>
            <person name="Movilla M.J."/>
            <person name="Shroff H."/>
            <person name="Dean J."/>
        </authorList>
    </citation>
    <scope>FUNCTION</scope>
    <scope>SUBCELLULAR LOCATION</scope>
    <scope>DISRUPTION PHENOTYPE</scope>
</reference>
<organism>
    <name type="scientific">Mus musculus</name>
    <name type="common">Mouse</name>
    <dbReference type="NCBI Taxonomy" id="10090"/>
    <lineage>
        <taxon>Eukaryota</taxon>
        <taxon>Metazoa</taxon>
        <taxon>Chordata</taxon>
        <taxon>Craniata</taxon>
        <taxon>Vertebrata</taxon>
        <taxon>Euteleostomi</taxon>
        <taxon>Mammalia</taxon>
        <taxon>Eutheria</taxon>
        <taxon>Euarchontoglires</taxon>
        <taxon>Glires</taxon>
        <taxon>Rodentia</taxon>
        <taxon>Myomorpha</taxon>
        <taxon>Muroidea</taxon>
        <taxon>Muridae</taxon>
        <taxon>Murinae</taxon>
        <taxon>Mus</taxon>
        <taxon>Mus</taxon>
    </lineage>
</organism>
<accession>Q8VDD5</accession>
<accession>Q3UHT9</accession>
<accession>Q3UHU4</accession>
<accession>Q6KAN6</accession>
<accession>Q811I2</accession>
<dbReference type="EMBL" id="AJ312390">
    <property type="protein sequence ID" value="CAC85955.1"/>
    <property type="molecule type" value="mRNA"/>
</dbReference>
<dbReference type="EMBL" id="AK147203">
    <property type="protein sequence ID" value="BAE27761.1"/>
    <property type="molecule type" value="mRNA"/>
</dbReference>
<dbReference type="EMBL" id="AK147206">
    <property type="protein sequence ID" value="BAE27763.1"/>
    <property type="molecule type" value="mRNA"/>
</dbReference>
<dbReference type="EMBL" id="AK147208">
    <property type="protein sequence ID" value="BAE27765.1"/>
    <property type="molecule type" value="mRNA"/>
</dbReference>
<dbReference type="EMBL" id="AK147209">
    <property type="protein sequence ID" value="BAE27766.1"/>
    <property type="molecule type" value="mRNA"/>
</dbReference>
<dbReference type="EMBL" id="AK147210">
    <property type="protein sequence ID" value="BAE27767.1"/>
    <property type="molecule type" value="mRNA"/>
</dbReference>
<dbReference type="EMBL" id="AK147211">
    <property type="protein sequence ID" value="BAE27768.1"/>
    <property type="status" value="ALT_INIT"/>
    <property type="molecule type" value="mRNA"/>
</dbReference>
<dbReference type="EMBL" id="AK147215">
    <property type="protein sequence ID" value="BAE27772.1"/>
    <property type="molecule type" value="mRNA"/>
</dbReference>
<dbReference type="EMBL" id="AK147216">
    <property type="protein sequence ID" value="BAE27773.1"/>
    <property type="molecule type" value="mRNA"/>
</dbReference>
<dbReference type="EMBL" id="AK147221">
    <property type="protein sequence ID" value="BAE27776.1"/>
    <property type="molecule type" value="mRNA"/>
</dbReference>
<dbReference type="EMBL" id="AK147222">
    <property type="protein sequence ID" value="BAE27777.1"/>
    <property type="molecule type" value="mRNA"/>
</dbReference>
<dbReference type="EMBL" id="AK147223">
    <property type="protein sequence ID" value="BAE27778.1"/>
    <property type="molecule type" value="mRNA"/>
</dbReference>
<dbReference type="EMBL" id="AK147233">
    <property type="protein sequence ID" value="BAE27783.1"/>
    <property type="molecule type" value="mRNA"/>
</dbReference>
<dbReference type="EMBL" id="AK147235">
    <property type="protein sequence ID" value="BAE27785.1"/>
    <property type="molecule type" value="mRNA"/>
</dbReference>
<dbReference type="EMBL" id="AK147296">
    <property type="protein sequence ID" value="BAE27829.1"/>
    <property type="molecule type" value="mRNA"/>
</dbReference>
<dbReference type="EMBL" id="AK147407">
    <property type="protein sequence ID" value="BAE27894.1"/>
    <property type="molecule type" value="mRNA"/>
</dbReference>
<dbReference type="EMBL" id="AK147430">
    <property type="protein sequence ID" value="BAE27906.1"/>
    <property type="molecule type" value="mRNA"/>
</dbReference>
<dbReference type="EMBL" id="AL583886">
    <property type="status" value="NOT_ANNOTATED_CDS"/>
    <property type="molecule type" value="Genomic_DNA"/>
</dbReference>
<dbReference type="EMBL" id="AK131171">
    <property type="protein sequence ID" value="BAD21421.1"/>
    <property type="molecule type" value="mRNA"/>
</dbReference>
<dbReference type="EMBL" id="BC044834">
    <property type="protein sequence ID" value="AAH44834.1"/>
    <property type="molecule type" value="mRNA"/>
</dbReference>
<dbReference type="CCDS" id="CCDS27605.1"/>
<dbReference type="RefSeq" id="NP_071855.2">
    <property type="nucleotide sequence ID" value="NM_022410.4"/>
</dbReference>
<dbReference type="SMR" id="Q8VDD5"/>
<dbReference type="BioGRID" id="201650">
    <property type="interactions" value="266"/>
</dbReference>
<dbReference type="DIP" id="DIP-29546N"/>
<dbReference type="FunCoup" id="Q8VDD5">
    <property type="interactions" value="1594"/>
</dbReference>
<dbReference type="IntAct" id="Q8VDD5">
    <property type="interactions" value="216"/>
</dbReference>
<dbReference type="MINT" id="Q8VDD5"/>
<dbReference type="STRING" id="10090.ENSMUSP00000016771"/>
<dbReference type="GlyConnect" id="2523">
    <property type="glycosylation" value="1 N-Linked glycan (1 site)"/>
</dbReference>
<dbReference type="GlyCosmos" id="Q8VDD5">
    <property type="glycosylation" value="1 site, 1 glycan"/>
</dbReference>
<dbReference type="GlyGen" id="Q8VDD5">
    <property type="glycosylation" value="3 sites, 3 N-linked glycans (2 sites), 1 O-linked glycan (1 site)"/>
</dbReference>
<dbReference type="iPTMnet" id="Q8VDD5"/>
<dbReference type="MetOSite" id="Q8VDD5"/>
<dbReference type="PhosphoSitePlus" id="Q8VDD5"/>
<dbReference type="SwissPalm" id="Q8VDD5"/>
<dbReference type="CPTAC" id="non-CPTAC-3994"/>
<dbReference type="jPOST" id="Q8VDD5"/>
<dbReference type="PaxDb" id="10090-ENSMUSP00000016771"/>
<dbReference type="PeptideAtlas" id="Q8VDD5"/>
<dbReference type="ProteomicsDB" id="293598"/>
<dbReference type="Pumba" id="Q8VDD5"/>
<dbReference type="Antibodypedia" id="887">
    <property type="antibodies" value="504 antibodies from 42 providers"/>
</dbReference>
<dbReference type="DNASU" id="17886"/>
<dbReference type="Ensembl" id="ENSMUST00000016771.13">
    <property type="protein sequence ID" value="ENSMUSP00000016771.7"/>
    <property type="gene ID" value="ENSMUSG00000022443.18"/>
</dbReference>
<dbReference type="GeneID" id="17886"/>
<dbReference type="KEGG" id="mmu:17886"/>
<dbReference type="UCSC" id="uc007woc.2">
    <property type="organism name" value="mouse"/>
</dbReference>
<dbReference type="AGR" id="MGI:107717"/>
<dbReference type="CTD" id="4627"/>
<dbReference type="MGI" id="MGI:107717">
    <property type="gene designation" value="Myh9"/>
</dbReference>
<dbReference type="VEuPathDB" id="HostDB:ENSMUSG00000022443"/>
<dbReference type="eggNOG" id="KOG0161">
    <property type="taxonomic scope" value="Eukaryota"/>
</dbReference>
<dbReference type="GeneTree" id="ENSGT00940000155632"/>
<dbReference type="HOGENOM" id="CLU_000192_4_2_1"/>
<dbReference type="InParanoid" id="Q8VDD5"/>
<dbReference type="OMA" id="DVRFLHK"/>
<dbReference type="OrthoDB" id="10254995at2759"/>
<dbReference type="PhylomeDB" id="Q8VDD5"/>
<dbReference type="TreeFam" id="TF333601"/>
<dbReference type="Reactome" id="R-MMU-2029482">
    <property type="pathway name" value="Regulation of actin dynamics for phagocytic cup formation"/>
</dbReference>
<dbReference type="Reactome" id="R-MMU-5627123">
    <property type="pathway name" value="RHO GTPases activate PAKs"/>
</dbReference>
<dbReference type="BioGRID-ORCS" id="17886">
    <property type="hits" value="25 hits in 81 CRISPR screens"/>
</dbReference>
<dbReference type="CD-CODE" id="CE726F99">
    <property type="entry name" value="Postsynaptic density"/>
</dbReference>
<dbReference type="ChiTaRS" id="Myh9">
    <property type="organism name" value="mouse"/>
</dbReference>
<dbReference type="PRO" id="PR:Q8VDD5"/>
<dbReference type="Proteomes" id="UP000000589">
    <property type="component" value="Chromosome 15"/>
</dbReference>
<dbReference type="RNAct" id="Q8VDD5">
    <property type="molecule type" value="protein"/>
</dbReference>
<dbReference type="Bgee" id="ENSMUSG00000022443">
    <property type="expression patterns" value="Expressed in aortic valve and 274 other cell types or tissues"/>
</dbReference>
<dbReference type="ExpressionAtlas" id="Q8VDD5">
    <property type="expression patterns" value="baseline and differential"/>
</dbReference>
<dbReference type="GO" id="GO:0015629">
    <property type="term" value="C:actin cytoskeleton"/>
    <property type="evidence" value="ECO:0000250"/>
    <property type="project" value="UniProtKB"/>
</dbReference>
<dbReference type="GO" id="GO:0005826">
    <property type="term" value="C:actomyosin contractile ring"/>
    <property type="evidence" value="ECO:0000250"/>
    <property type="project" value="UniProtKB"/>
</dbReference>
<dbReference type="GO" id="GO:0005912">
    <property type="term" value="C:adherens junction"/>
    <property type="evidence" value="ECO:0000314"/>
    <property type="project" value="MGI"/>
</dbReference>
<dbReference type="GO" id="GO:0005903">
    <property type="term" value="C:brush border"/>
    <property type="evidence" value="ECO:0000314"/>
    <property type="project" value="UniProtKB"/>
</dbReference>
<dbReference type="GO" id="GO:0005938">
    <property type="term" value="C:cell cortex"/>
    <property type="evidence" value="ECO:0000314"/>
    <property type="project" value="UniProtKB"/>
</dbReference>
<dbReference type="GO" id="GO:0031252">
    <property type="term" value="C:cell leading edge"/>
    <property type="evidence" value="ECO:0000250"/>
    <property type="project" value="UniProtKB"/>
</dbReference>
<dbReference type="GO" id="GO:0009986">
    <property type="term" value="C:cell surface"/>
    <property type="evidence" value="ECO:0007669"/>
    <property type="project" value="Ensembl"/>
</dbReference>
<dbReference type="GO" id="GO:0032154">
    <property type="term" value="C:cleavage furrow"/>
    <property type="evidence" value="ECO:0000250"/>
    <property type="project" value="UniProtKB"/>
</dbReference>
<dbReference type="GO" id="GO:0008180">
    <property type="term" value="C:COP9 signalosome"/>
    <property type="evidence" value="ECO:0007669"/>
    <property type="project" value="Ensembl"/>
</dbReference>
<dbReference type="GO" id="GO:0030863">
    <property type="term" value="C:cortical cytoskeleton"/>
    <property type="evidence" value="ECO:0000314"/>
    <property type="project" value="MGI"/>
</dbReference>
<dbReference type="GO" id="GO:0060473">
    <property type="term" value="C:cortical granule"/>
    <property type="evidence" value="ECO:0000314"/>
    <property type="project" value="UniProtKB"/>
</dbReference>
<dbReference type="GO" id="GO:0005737">
    <property type="term" value="C:cytoplasm"/>
    <property type="evidence" value="ECO:0000314"/>
    <property type="project" value="MGI"/>
</dbReference>
<dbReference type="GO" id="GO:0009898">
    <property type="term" value="C:cytoplasmic side of plasma membrane"/>
    <property type="evidence" value="ECO:0000314"/>
    <property type="project" value="MGI"/>
</dbReference>
<dbReference type="GO" id="GO:0005829">
    <property type="term" value="C:cytosol"/>
    <property type="evidence" value="ECO:0000250"/>
    <property type="project" value="UniProtKB"/>
</dbReference>
<dbReference type="GO" id="GO:0005794">
    <property type="term" value="C:Golgi apparatus"/>
    <property type="evidence" value="ECO:0000314"/>
    <property type="project" value="MGI"/>
</dbReference>
<dbReference type="GO" id="GO:0001772">
    <property type="term" value="C:immunological synapse"/>
    <property type="evidence" value="ECO:0000314"/>
    <property type="project" value="MGI"/>
</dbReference>
<dbReference type="GO" id="GO:0016459">
    <property type="term" value="C:myosin complex"/>
    <property type="evidence" value="ECO:0000314"/>
    <property type="project" value="MGI"/>
</dbReference>
<dbReference type="GO" id="GO:0016460">
    <property type="term" value="C:myosin II complex"/>
    <property type="evidence" value="ECO:0000314"/>
    <property type="project" value="MGI"/>
</dbReference>
<dbReference type="GO" id="GO:0097513">
    <property type="term" value="C:myosin II filament"/>
    <property type="evidence" value="ECO:0007669"/>
    <property type="project" value="Ensembl"/>
</dbReference>
<dbReference type="GO" id="GO:0031594">
    <property type="term" value="C:neuromuscular junction"/>
    <property type="evidence" value="ECO:0000314"/>
    <property type="project" value="MGI"/>
</dbReference>
<dbReference type="GO" id="GO:0016604">
    <property type="term" value="C:nuclear body"/>
    <property type="evidence" value="ECO:0007669"/>
    <property type="project" value="Ensembl"/>
</dbReference>
<dbReference type="GO" id="GO:0005634">
    <property type="term" value="C:nucleus"/>
    <property type="evidence" value="ECO:0000250"/>
    <property type="project" value="UniProtKB"/>
</dbReference>
<dbReference type="GO" id="GO:0005886">
    <property type="term" value="C:plasma membrane"/>
    <property type="evidence" value="ECO:0000250"/>
    <property type="project" value="UniProtKB"/>
</dbReference>
<dbReference type="GO" id="GO:0032991">
    <property type="term" value="C:protein-containing complex"/>
    <property type="evidence" value="ECO:0000250"/>
    <property type="project" value="UniProtKB"/>
</dbReference>
<dbReference type="GO" id="GO:0001726">
    <property type="term" value="C:ruffle"/>
    <property type="evidence" value="ECO:0000250"/>
    <property type="project" value="UniProtKB"/>
</dbReference>
<dbReference type="GO" id="GO:0005819">
    <property type="term" value="C:spindle"/>
    <property type="evidence" value="ECO:0000314"/>
    <property type="project" value="MGI"/>
</dbReference>
<dbReference type="GO" id="GO:0001725">
    <property type="term" value="C:stress fiber"/>
    <property type="evidence" value="ECO:0000314"/>
    <property type="project" value="MGI"/>
</dbReference>
<dbReference type="GO" id="GO:0001931">
    <property type="term" value="C:uropod"/>
    <property type="evidence" value="ECO:0000314"/>
    <property type="project" value="MGI"/>
</dbReference>
<dbReference type="GO" id="GO:0003779">
    <property type="term" value="F:actin binding"/>
    <property type="evidence" value="ECO:0000266"/>
    <property type="project" value="MGI"/>
</dbReference>
<dbReference type="GO" id="GO:0051015">
    <property type="term" value="F:actin filament binding"/>
    <property type="evidence" value="ECO:0000314"/>
    <property type="project" value="MGI"/>
</dbReference>
<dbReference type="GO" id="GO:0043531">
    <property type="term" value="F:ADP binding"/>
    <property type="evidence" value="ECO:0000266"/>
    <property type="project" value="MGI"/>
</dbReference>
<dbReference type="GO" id="GO:0005524">
    <property type="term" value="F:ATP binding"/>
    <property type="evidence" value="ECO:0000266"/>
    <property type="project" value="MGI"/>
</dbReference>
<dbReference type="GO" id="GO:0005516">
    <property type="term" value="F:calmodulin binding"/>
    <property type="evidence" value="ECO:0007669"/>
    <property type="project" value="UniProtKB-KW"/>
</dbReference>
<dbReference type="GO" id="GO:0005178">
    <property type="term" value="F:integrin binding"/>
    <property type="evidence" value="ECO:0000250"/>
    <property type="project" value="UniProtKB"/>
</dbReference>
<dbReference type="GO" id="GO:0000146">
    <property type="term" value="F:microfilament motor activity"/>
    <property type="evidence" value="ECO:0000250"/>
    <property type="project" value="UniProtKB"/>
</dbReference>
<dbReference type="GO" id="GO:0019904">
    <property type="term" value="F:protein domain specific binding"/>
    <property type="evidence" value="ECO:0000353"/>
    <property type="project" value="UniProtKB"/>
</dbReference>
<dbReference type="GO" id="GO:0042803">
    <property type="term" value="F:protein homodimerization activity"/>
    <property type="evidence" value="ECO:0000250"/>
    <property type="project" value="UniProtKB"/>
</dbReference>
<dbReference type="GO" id="GO:0043495">
    <property type="term" value="F:protein-membrane adaptor activity"/>
    <property type="evidence" value="ECO:0000250"/>
    <property type="project" value="UniProtKB"/>
</dbReference>
<dbReference type="GO" id="GO:0001618">
    <property type="term" value="F:virus receptor activity"/>
    <property type="evidence" value="ECO:0007669"/>
    <property type="project" value="Ensembl"/>
</dbReference>
<dbReference type="GO" id="GO:0030036">
    <property type="term" value="P:actin cytoskeleton organization"/>
    <property type="evidence" value="ECO:0000250"/>
    <property type="project" value="UniProtKB"/>
</dbReference>
<dbReference type="GO" id="GO:0030048">
    <property type="term" value="P:actin filament-based movement"/>
    <property type="evidence" value="ECO:0000250"/>
    <property type="project" value="UniProtKB"/>
</dbReference>
<dbReference type="GO" id="GO:0031032">
    <property type="term" value="P:actomyosin structure organization"/>
    <property type="evidence" value="ECO:0007669"/>
    <property type="project" value="Ensembl"/>
</dbReference>
<dbReference type="GO" id="GO:0001525">
    <property type="term" value="P:angiogenesis"/>
    <property type="evidence" value="ECO:0000250"/>
    <property type="project" value="UniProtKB"/>
</dbReference>
<dbReference type="GO" id="GO:0043534">
    <property type="term" value="P:blood vessel endothelial cell migration"/>
    <property type="evidence" value="ECO:0000250"/>
    <property type="project" value="UniProtKB"/>
</dbReference>
<dbReference type="GO" id="GO:0007155">
    <property type="term" value="P:cell adhesion"/>
    <property type="evidence" value="ECO:0000315"/>
    <property type="project" value="MGI"/>
</dbReference>
<dbReference type="GO" id="GO:0000902">
    <property type="term" value="P:cell morphogenesis"/>
    <property type="evidence" value="ECO:0000315"/>
    <property type="project" value="MGI"/>
</dbReference>
<dbReference type="GO" id="GO:0048870">
    <property type="term" value="P:cell motility"/>
    <property type="evidence" value="ECO:0000315"/>
    <property type="project" value="MGI"/>
</dbReference>
<dbReference type="GO" id="GO:0098609">
    <property type="term" value="P:cell-cell adhesion"/>
    <property type="evidence" value="ECO:0000315"/>
    <property type="project" value="MGI"/>
</dbReference>
<dbReference type="GO" id="GO:0060471">
    <property type="term" value="P:cortical granule exocytosis"/>
    <property type="evidence" value="ECO:0000315"/>
    <property type="project" value="UniProtKB"/>
</dbReference>
<dbReference type="GO" id="GO:0032506">
    <property type="term" value="P:cytokinetic process"/>
    <property type="evidence" value="ECO:0000250"/>
    <property type="project" value="UniProtKB"/>
</dbReference>
<dbReference type="GO" id="GO:0060327">
    <property type="term" value="P:cytoplasmic actin-based contraction involved in cell motility"/>
    <property type="evidence" value="ECO:0000315"/>
    <property type="project" value="MGI"/>
</dbReference>
<dbReference type="GO" id="GO:0035987">
    <property type="term" value="P:endodermal cell differentiation"/>
    <property type="evidence" value="ECO:0000315"/>
    <property type="project" value="MGI"/>
</dbReference>
<dbReference type="GO" id="GO:0051295">
    <property type="term" value="P:establishment of meiotic spindle localization"/>
    <property type="evidence" value="ECO:0000314"/>
    <property type="project" value="MGI"/>
</dbReference>
<dbReference type="GO" id="GO:0001768">
    <property type="term" value="P:establishment of T cell polarity"/>
    <property type="evidence" value="ECO:0000315"/>
    <property type="project" value="MGI"/>
</dbReference>
<dbReference type="GO" id="GO:0001701">
    <property type="term" value="P:in utero embryonic development"/>
    <property type="evidence" value="ECO:0000315"/>
    <property type="project" value="MGI"/>
</dbReference>
<dbReference type="GO" id="GO:0032418">
    <property type="term" value="P:lysosome localization"/>
    <property type="evidence" value="ECO:0007669"/>
    <property type="project" value="Ensembl"/>
</dbReference>
<dbReference type="GO" id="GO:0000212">
    <property type="term" value="P:meiotic spindle organization"/>
    <property type="evidence" value="ECO:0000314"/>
    <property type="project" value="MGI"/>
</dbReference>
<dbReference type="GO" id="GO:0006509">
    <property type="term" value="P:membrane protein ectodomain proteolysis"/>
    <property type="evidence" value="ECO:0000250"/>
    <property type="project" value="UniProtKB"/>
</dbReference>
<dbReference type="GO" id="GO:0030224">
    <property type="term" value="P:monocyte differentiation"/>
    <property type="evidence" value="ECO:0000250"/>
    <property type="project" value="UniProtKB"/>
</dbReference>
<dbReference type="GO" id="GO:0007520">
    <property type="term" value="P:myoblast fusion"/>
    <property type="evidence" value="ECO:0000315"/>
    <property type="project" value="MGI"/>
</dbReference>
<dbReference type="GO" id="GO:1903919">
    <property type="term" value="P:negative regulation of actin filament severing"/>
    <property type="evidence" value="ECO:0000315"/>
    <property type="project" value="UniProtKB"/>
</dbReference>
<dbReference type="GO" id="GO:0006911">
    <property type="term" value="P:phagocytosis, engulfment"/>
    <property type="evidence" value="ECO:0000315"/>
    <property type="project" value="UniProtKB"/>
</dbReference>
<dbReference type="GO" id="GO:0001778">
    <property type="term" value="P:plasma membrane repair"/>
    <property type="evidence" value="ECO:0000315"/>
    <property type="project" value="MGI"/>
</dbReference>
<dbReference type="GO" id="GO:0030220">
    <property type="term" value="P:platelet formation"/>
    <property type="evidence" value="ECO:0000250"/>
    <property type="project" value="UniProtKB"/>
</dbReference>
<dbReference type="GO" id="GO:1903923">
    <property type="term" value="P:positive regulation of protein processing in phagocytic vesicle"/>
    <property type="evidence" value="ECO:0000315"/>
    <property type="project" value="UniProtKB"/>
</dbReference>
<dbReference type="GO" id="GO:0015031">
    <property type="term" value="P:protein transport"/>
    <property type="evidence" value="ECO:0000250"/>
    <property type="project" value="UniProtKB"/>
</dbReference>
<dbReference type="GO" id="GO:0008360">
    <property type="term" value="P:regulation of cell shape"/>
    <property type="evidence" value="ECO:0000315"/>
    <property type="project" value="MGI"/>
</dbReference>
<dbReference type="GO" id="GO:1905684">
    <property type="term" value="P:regulation of plasma membrane repair"/>
    <property type="evidence" value="ECO:0007669"/>
    <property type="project" value="Ensembl"/>
</dbReference>
<dbReference type="GO" id="GO:0032796">
    <property type="term" value="P:uropod organization"/>
    <property type="evidence" value="ECO:0000315"/>
    <property type="project" value="MGI"/>
</dbReference>
<dbReference type="FunFam" id="2.30.30.360:FF:000001">
    <property type="entry name" value="Myosin heavy chain"/>
    <property type="match status" value="1"/>
</dbReference>
<dbReference type="FunFam" id="3.30.70.1590:FF:000001">
    <property type="entry name" value="Myosin heavy chain"/>
    <property type="match status" value="1"/>
</dbReference>
<dbReference type="FunFam" id="1.10.10.820:FF:000002">
    <property type="entry name" value="Myosin heavy chain 10"/>
    <property type="match status" value="1"/>
</dbReference>
<dbReference type="FunFam" id="1.20.120.720:FF:000002">
    <property type="entry name" value="Myosin heavy chain 10"/>
    <property type="match status" value="1"/>
</dbReference>
<dbReference type="FunFam" id="1.20.5.4820:FF:000002">
    <property type="entry name" value="Myosin heavy chain 10"/>
    <property type="match status" value="1"/>
</dbReference>
<dbReference type="FunFam" id="1.20.58.530:FF:000003">
    <property type="entry name" value="Myosin heavy chain 10"/>
    <property type="match status" value="1"/>
</dbReference>
<dbReference type="FunFam" id="1.20.5.340:FF:000008">
    <property type="entry name" value="Myosin heavy chain 11"/>
    <property type="match status" value="1"/>
</dbReference>
<dbReference type="FunFam" id="3.40.850.10:FF:000175">
    <property type="entry name" value="Myosin heavy chain 9"/>
    <property type="match status" value="1"/>
</dbReference>
<dbReference type="FunFam" id="1.20.5.340:FF:000007">
    <property type="entry name" value="Myosin heavy chain, non-muscle"/>
    <property type="match status" value="1"/>
</dbReference>
<dbReference type="FunFam" id="4.10.270.10:FF:000001">
    <property type="entry name" value="Myosin heavy chain, non-muscle"/>
    <property type="match status" value="1"/>
</dbReference>
<dbReference type="FunFam" id="1.20.5.340:FF:000009">
    <property type="entry name" value="myosin-11 isoform X2"/>
    <property type="match status" value="1"/>
</dbReference>
<dbReference type="Gene3D" id="1.10.10.820">
    <property type="match status" value="1"/>
</dbReference>
<dbReference type="Gene3D" id="1.20.5.340">
    <property type="match status" value="5"/>
</dbReference>
<dbReference type="Gene3D" id="1.20.58.530">
    <property type="match status" value="1"/>
</dbReference>
<dbReference type="Gene3D" id="3.30.70.1590">
    <property type="match status" value="1"/>
</dbReference>
<dbReference type="Gene3D" id="6.10.250.2420">
    <property type="match status" value="1"/>
</dbReference>
<dbReference type="Gene3D" id="3.40.850.10">
    <property type="entry name" value="Kinesin motor domain"/>
    <property type="match status" value="1"/>
</dbReference>
<dbReference type="Gene3D" id="2.30.30.360">
    <property type="entry name" value="Myosin S1 fragment, N-terminal"/>
    <property type="match status" value="1"/>
</dbReference>
<dbReference type="Gene3D" id="1.20.120.720">
    <property type="entry name" value="Myosin VI head, motor domain, U50 subdomain"/>
    <property type="match status" value="1"/>
</dbReference>
<dbReference type="Gene3D" id="4.10.270.10">
    <property type="entry name" value="Myosin, subunit A"/>
    <property type="match status" value="1"/>
</dbReference>
<dbReference type="InterPro" id="IPR000048">
    <property type="entry name" value="IQ_motif_EF-hand-BS"/>
</dbReference>
<dbReference type="InterPro" id="IPR036961">
    <property type="entry name" value="Kinesin_motor_dom_sf"/>
</dbReference>
<dbReference type="InterPro" id="IPR001609">
    <property type="entry name" value="Myosin_head_motor_dom-like"/>
</dbReference>
<dbReference type="InterPro" id="IPR004009">
    <property type="entry name" value="Myosin_N"/>
</dbReference>
<dbReference type="InterPro" id="IPR008989">
    <property type="entry name" value="Myosin_S1_N"/>
</dbReference>
<dbReference type="InterPro" id="IPR002928">
    <property type="entry name" value="Myosin_tail"/>
</dbReference>
<dbReference type="InterPro" id="IPR027417">
    <property type="entry name" value="P-loop_NTPase"/>
</dbReference>
<dbReference type="PANTHER" id="PTHR45615">
    <property type="entry name" value="MYOSIN HEAVY CHAIN, NON-MUSCLE"/>
    <property type="match status" value="1"/>
</dbReference>
<dbReference type="PANTHER" id="PTHR45615:SF16">
    <property type="entry name" value="MYOSIN-9"/>
    <property type="match status" value="1"/>
</dbReference>
<dbReference type="Pfam" id="PF00063">
    <property type="entry name" value="Myosin_head"/>
    <property type="match status" value="1"/>
</dbReference>
<dbReference type="Pfam" id="PF02736">
    <property type="entry name" value="Myosin_N"/>
    <property type="match status" value="1"/>
</dbReference>
<dbReference type="Pfam" id="PF01576">
    <property type="entry name" value="Myosin_tail_1"/>
    <property type="match status" value="1"/>
</dbReference>
<dbReference type="PRINTS" id="PR00193">
    <property type="entry name" value="MYOSINHEAVY"/>
</dbReference>
<dbReference type="SMART" id="SM00015">
    <property type="entry name" value="IQ"/>
    <property type="match status" value="1"/>
</dbReference>
<dbReference type="SMART" id="SM00242">
    <property type="entry name" value="MYSc"/>
    <property type="match status" value="1"/>
</dbReference>
<dbReference type="SUPFAM" id="SSF90257">
    <property type="entry name" value="Myosin rod fragments"/>
    <property type="match status" value="6"/>
</dbReference>
<dbReference type="SUPFAM" id="SSF52540">
    <property type="entry name" value="P-loop containing nucleoside triphosphate hydrolases"/>
    <property type="match status" value="1"/>
</dbReference>
<dbReference type="PROSITE" id="PS50096">
    <property type="entry name" value="IQ"/>
    <property type="match status" value="1"/>
</dbReference>
<dbReference type="PROSITE" id="PS51456">
    <property type="entry name" value="MYOSIN_MOTOR"/>
    <property type="match status" value="1"/>
</dbReference>
<dbReference type="PROSITE" id="PS51844">
    <property type="entry name" value="SH3_LIKE"/>
    <property type="match status" value="1"/>
</dbReference>